<sequence length="226" mass="25353">MSSSDSVNNGVNSRMYFRNPSFSNVILNDNWSDLPLSVDDSQDMAIYNTLRDAVSSGWTPSVPPVTSPAEENKPPATKASGSHAPRQKGMQYRGVRRRPWGKFAAEIRDPKKNGARVWLGTYETPEDAAVAYDRAAFQLRGSKAKLNFPHLIGSCKYEPVRIRPRRRSPEPSVSDQLTSEQKRESHVDDGESSLVVPELDFTVDQFYFDGSLLMDQSECSYSDNRI</sequence>
<dbReference type="EMBL" id="AC002388">
    <property type="protein sequence ID" value="AAC31840.1"/>
    <property type="molecule type" value="Genomic_DNA"/>
</dbReference>
<dbReference type="EMBL" id="CP002685">
    <property type="protein sequence ID" value="AEC10473.1"/>
    <property type="molecule type" value="Genomic_DNA"/>
</dbReference>
<dbReference type="EMBL" id="AF325089">
    <property type="protein sequence ID" value="AAK17157.1"/>
    <property type="molecule type" value="mRNA"/>
</dbReference>
<dbReference type="EMBL" id="AF370540">
    <property type="protein sequence ID" value="AAK48967.1"/>
    <property type="molecule type" value="mRNA"/>
</dbReference>
<dbReference type="EMBL" id="AY072471">
    <property type="protein sequence ID" value="AAL66886.1"/>
    <property type="molecule type" value="mRNA"/>
</dbReference>
<dbReference type="EMBL" id="AY088387">
    <property type="protein sequence ID" value="AAM65925.1"/>
    <property type="molecule type" value="mRNA"/>
</dbReference>
<dbReference type="PIR" id="T00409">
    <property type="entry name" value="T00409"/>
</dbReference>
<dbReference type="RefSeq" id="NP_182011.1">
    <property type="nucleotide sequence ID" value="NM_130048.3"/>
</dbReference>
<dbReference type="SMR" id="Q8L9K1"/>
<dbReference type="BioGRID" id="4429">
    <property type="interactions" value="7"/>
</dbReference>
<dbReference type="FunCoup" id="Q8L9K1">
    <property type="interactions" value="4"/>
</dbReference>
<dbReference type="IntAct" id="Q8L9K1">
    <property type="interactions" value="5"/>
</dbReference>
<dbReference type="STRING" id="3702.Q8L9K1"/>
<dbReference type="iPTMnet" id="Q8L9K1"/>
<dbReference type="PaxDb" id="3702-AT2G44840.1"/>
<dbReference type="ProteomicsDB" id="220690"/>
<dbReference type="EnsemblPlants" id="AT2G44840.1">
    <property type="protein sequence ID" value="AT2G44840.1"/>
    <property type="gene ID" value="AT2G44840"/>
</dbReference>
<dbReference type="GeneID" id="819093"/>
<dbReference type="Gramene" id="AT2G44840.1">
    <property type="protein sequence ID" value="AT2G44840.1"/>
    <property type="gene ID" value="AT2G44840"/>
</dbReference>
<dbReference type="KEGG" id="ath:AT2G44840"/>
<dbReference type="Araport" id="AT2G44840"/>
<dbReference type="TAIR" id="AT2G44840">
    <property type="gene designation" value="ERF13"/>
</dbReference>
<dbReference type="eggNOG" id="ENOG502SNQ8">
    <property type="taxonomic scope" value="Eukaryota"/>
</dbReference>
<dbReference type="HOGENOM" id="CLU_058713_3_0_1"/>
<dbReference type="InParanoid" id="Q8L9K1"/>
<dbReference type="OMA" id="QKRESHV"/>
<dbReference type="PhylomeDB" id="Q8L9K1"/>
<dbReference type="PRO" id="PR:Q8L9K1"/>
<dbReference type="Proteomes" id="UP000006548">
    <property type="component" value="Chromosome 2"/>
</dbReference>
<dbReference type="ExpressionAtlas" id="Q8L9K1">
    <property type="expression patterns" value="baseline and differential"/>
</dbReference>
<dbReference type="GO" id="GO:0005634">
    <property type="term" value="C:nucleus"/>
    <property type="evidence" value="ECO:0007005"/>
    <property type="project" value="TAIR"/>
</dbReference>
<dbReference type="GO" id="GO:0003677">
    <property type="term" value="F:DNA binding"/>
    <property type="evidence" value="ECO:0000314"/>
    <property type="project" value="TAIR"/>
</dbReference>
<dbReference type="GO" id="GO:0003700">
    <property type="term" value="F:DNA-binding transcription factor activity"/>
    <property type="evidence" value="ECO:0000250"/>
    <property type="project" value="TAIR"/>
</dbReference>
<dbReference type="GO" id="GO:0000976">
    <property type="term" value="F:transcription cis-regulatory region binding"/>
    <property type="evidence" value="ECO:0000353"/>
    <property type="project" value="TAIR"/>
</dbReference>
<dbReference type="GO" id="GO:0006952">
    <property type="term" value="P:defense response"/>
    <property type="evidence" value="ECO:0007669"/>
    <property type="project" value="UniProtKB-KW"/>
</dbReference>
<dbReference type="GO" id="GO:0009873">
    <property type="term" value="P:ethylene-activated signaling pathway"/>
    <property type="evidence" value="ECO:0000304"/>
    <property type="project" value="TAIR"/>
</dbReference>
<dbReference type="CDD" id="cd00018">
    <property type="entry name" value="AP2"/>
    <property type="match status" value="1"/>
</dbReference>
<dbReference type="FunFam" id="3.30.730.10:FF:000001">
    <property type="entry name" value="Ethylene-responsive transcription factor 2"/>
    <property type="match status" value="1"/>
</dbReference>
<dbReference type="Gene3D" id="3.30.730.10">
    <property type="entry name" value="AP2/ERF domain"/>
    <property type="match status" value="1"/>
</dbReference>
<dbReference type="InterPro" id="IPR001471">
    <property type="entry name" value="AP2/ERF_dom"/>
</dbReference>
<dbReference type="InterPro" id="IPR036955">
    <property type="entry name" value="AP2/ERF_dom_sf"/>
</dbReference>
<dbReference type="InterPro" id="IPR016177">
    <property type="entry name" value="DNA-bd_dom_sf"/>
</dbReference>
<dbReference type="InterPro" id="IPR044808">
    <property type="entry name" value="ERF_plant"/>
</dbReference>
<dbReference type="PANTHER" id="PTHR31190">
    <property type="entry name" value="DNA-BINDING DOMAIN"/>
    <property type="match status" value="1"/>
</dbReference>
<dbReference type="PANTHER" id="PTHR31190:SF274">
    <property type="entry name" value="ETHYLENE-RESPONSIVE TRANSCRIPTION FACTOR 13"/>
    <property type="match status" value="1"/>
</dbReference>
<dbReference type="Pfam" id="PF00847">
    <property type="entry name" value="AP2"/>
    <property type="match status" value="1"/>
</dbReference>
<dbReference type="PRINTS" id="PR00367">
    <property type="entry name" value="ETHRSPELEMNT"/>
</dbReference>
<dbReference type="SMART" id="SM00380">
    <property type="entry name" value="AP2"/>
    <property type="match status" value="1"/>
</dbReference>
<dbReference type="SUPFAM" id="SSF54171">
    <property type="entry name" value="DNA-binding domain"/>
    <property type="match status" value="1"/>
</dbReference>
<dbReference type="PROSITE" id="PS51032">
    <property type="entry name" value="AP2_ERF"/>
    <property type="match status" value="1"/>
</dbReference>
<gene>
    <name type="primary">ERF13</name>
    <name type="synonym">ERF-13</name>
    <name type="synonym">ERF099</name>
    <name type="ordered locus">At2g44840</name>
    <name type="ORF">T13E15.15</name>
</gene>
<accession>Q8L9K1</accession>
<accession>O22167</accession>
<comment type="function">
    <text evidence="4">Acts as a transcriptional activator. Binds to the GCC-box pathogenesis-related promoter element. Involved in the regulation of gene expression by stress factors and by components of stress signal transduction pathways.</text>
</comment>
<comment type="interaction">
    <interactant intactId="EBI-15204728">
        <id>Q8L9K1</id>
    </interactant>
    <interactant intactId="EBI-25517084">
        <id>A0A178WAA1</id>
        <label>At1g10650</label>
    </interactant>
    <organismsDiffer>false</organismsDiffer>
    <experiments>3</experiments>
</comment>
<comment type="interaction">
    <interactant intactId="EBI-15204728">
        <id>Q8L9K1</id>
    </interactant>
    <interactant intactId="EBI-1253508">
        <id>F4JL11</id>
        <label>IMPA2</label>
    </interactant>
    <organismsDiffer>false</organismsDiffer>
    <experiments>3</experiments>
</comment>
<comment type="interaction">
    <interactant intactId="EBI-15204728">
        <id>Q8L9K1</id>
    </interactant>
    <interactant intactId="EBI-25516228">
        <id>Q9CAW4</id>
        <label>TRAPPC6</label>
    </interactant>
    <organismsDiffer>false</organismsDiffer>
    <experiments>3</experiments>
</comment>
<comment type="subcellular location">
    <subcellularLocation>
        <location evidence="6">Nucleus</location>
    </subcellularLocation>
</comment>
<comment type="tissue specificity">
    <text evidence="4">Ubiquitously expressed after ethylene treatment.</text>
</comment>
<comment type="induction">
    <text evidence="4 5">Strongly induced by wounding. Induced by Pseudomonas syringae tomato (both virulent and avirulent avrRpt2 strains), independently of PAD4. Also induced by methyl jasmonate (MeJA) independently of JAR1, but seems to not be affected by ethylene. Induction by salicylic acid (SA) is controlled by growth and/or developmental conditions, and seems to be more efficient and independent of PAD4 in older plants.</text>
</comment>
<comment type="similarity">
    <text evidence="6">Belongs to the AP2/ERF transcription factor family. ERF subfamily.</text>
</comment>
<feature type="chain" id="PRO_0000112549" description="Ethylene-responsive transcription factor 13">
    <location>
        <begin position="1"/>
        <end position="226"/>
    </location>
</feature>
<feature type="DNA-binding region" description="AP2/ERF" evidence="2">
    <location>
        <begin position="91"/>
        <end position="149"/>
    </location>
</feature>
<feature type="region of interest" description="Disordered" evidence="3">
    <location>
        <begin position="57"/>
        <end position="91"/>
    </location>
</feature>
<feature type="region of interest" description="Disordered" evidence="3">
    <location>
        <begin position="165"/>
        <end position="191"/>
    </location>
</feature>
<feature type="short sequence motif" description="Nuclear localization signal" evidence="1">
    <location>
        <begin position="96"/>
        <end position="112"/>
    </location>
</feature>
<feature type="compositionally biased region" description="Basic and acidic residues" evidence="3">
    <location>
        <begin position="180"/>
        <end position="189"/>
    </location>
</feature>
<feature type="sequence conflict" description="In Ref. 4; AAM65925." evidence="6" ref="4">
    <original>G</original>
    <variation>A</variation>
    <location>
        <position position="57"/>
    </location>
</feature>
<feature type="sequence conflict" description="In Ref. 4; AAM65925." evidence="6" ref="4">
    <original>N</original>
    <variation>D</variation>
    <location>
        <position position="72"/>
    </location>
</feature>
<feature type="sequence conflict" description="In Ref. 4; AAM65925." evidence="6" ref="4">
    <original>E</original>
    <variation>K</variation>
    <location>
        <position position="191"/>
    </location>
</feature>
<reference key="1">
    <citation type="journal article" date="1999" name="Nature">
        <title>Sequence and analysis of chromosome 2 of the plant Arabidopsis thaliana.</title>
        <authorList>
            <person name="Lin X."/>
            <person name="Kaul S."/>
            <person name="Rounsley S.D."/>
            <person name="Shea T.P."/>
            <person name="Benito M.-I."/>
            <person name="Town C.D."/>
            <person name="Fujii C.Y."/>
            <person name="Mason T.M."/>
            <person name="Bowman C.L."/>
            <person name="Barnstead M.E."/>
            <person name="Feldblyum T.V."/>
            <person name="Buell C.R."/>
            <person name="Ketchum K.A."/>
            <person name="Lee J.J."/>
            <person name="Ronning C.M."/>
            <person name="Koo H.L."/>
            <person name="Moffat K.S."/>
            <person name="Cronin L.A."/>
            <person name="Shen M."/>
            <person name="Pai G."/>
            <person name="Van Aken S."/>
            <person name="Umayam L."/>
            <person name="Tallon L.J."/>
            <person name="Gill J.E."/>
            <person name="Adams M.D."/>
            <person name="Carrera A.J."/>
            <person name="Creasy T.H."/>
            <person name="Goodman H.M."/>
            <person name="Somerville C.R."/>
            <person name="Copenhaver G.P."/>
            <person name="Preuss D."/>
            <person name="Nierman W.C."/>
            <person name="White O."/>
            <person name="Eisen J.A."/>
            <person name="Salzberg S.L."/>
            <person name="Fraser C.M."/>
            <person name="Venter J.C."/>
        </authorList>
    </citation>
    <scope>NUCLEOTIDE SEQUENCE [LARGE SCALE GENOMIC DNA]</scope>
    <source>
        <strain>cv. Columbia</strain>
    </source>
</reference>
<reference key="2">
    <citation type="journal article" date="2017" name="Plant J.">
        <title>Araport11: a complete reannotation of the Arabidopsis thaliana reference genome.</title>
        <authorList>
            <person name="Cheng C.Y."/>
            <person name="Krishnakumar V."/>
            <person name="Chan A.P."/>
            <person name="Thibaud-Nissen F."/>
            <person name="Schobel S."/>
            <person name="Town C.D."/>
        </authorList>
    </citation>
    <scope>GENOME REANNOTATION</scope>
    <source>
        <strain>cv. Columbia</strain>
    </source>
</reference>
<reference key="3">
    <citation type="journal article" date="2003" name="Science">
        <title>Empirical analysis of transcriptional activity in the Arabidopsis genome.</title>
        <authorList>
            <person name="Yamada K."/>
            <person name="Lim J."/>
            <person name="Dale J.M."/>
            <person name="Chen H."/>
            <person name="Shinn P."/>
            <person name="Palm C.J."/>
            <person name="Southwick A.M."/>
            <person name="Wu H.C."/>
            <person name="Kim C.J."/>
            <person name="Nguyen M."/>
            <person name="Pham P.K."/>
            <person name="Cheuk R.F."/>
            <person name="Karlin-Newmann G."/>
            <person name="Liu S.X."/>
            <person name="Lam B."/>
            <person name="Sakano H."/>
            <person name="Wu T."/>
            <person name="Yu G."/>
            <person name="Miranda M."/>
            <person name="Quach H.L."/>
            <person name="Tripp M."/>
            <person name="Chang C.H."/>
            <person name="Lee J.M."/>
            <person name="Toriumi M.J."/>
            <person name="Chan M.M."/>
            <person name="Tang C.C."/>
            <person name="Onodera C.S."/>
            <person name="Deng J.M."/>
            <person name="Akiyama K."/>
            <person name="Ansari Y."/>
            <person name="Arakawa T."/>
            <person name="Banh J."/>
            <person name="Banno F."/>
            <person name="Bowser L."/>
            <person name="Brooks S.Y."/>
            <person name="Carninci P."/>
            <person name="Chao Q."/>
            <person name="Choy N."/>
            <person name="Enju A."/>
            <person name="Goldsmith A.D."/>
            <person name="Gurjal M."/>
            <person name="Hansen N.F."/>
            <person name="Hayashizaki Y."/>
            <person name="Johnson-Hopson C."/>
            <person name="Hsuan V.W."/>
            <person name="Iida K."/>
            <person name="Karnes M."/>
            <person name="Khan S."/>
            <person name="Koesema E."/>
            <person name="Ishida J."/>
            <person name="Jiang P.X."/>
            <person name="Jones T."/>
            <person name="Kawai J."/>
            <person name="Kamiya A."/>
            <person name="Meyers C."/>
            <person name="Nakajima M."/>
            <person name="Narusaka M."/>
            <person name="Seki M."/>
            <person name="Sakurai T."/>
            <person name="Satou M."/>
            <person name="Tamse R."/>
            <person name="Vaysberg M."/>
            <person name="Wallender E.K."/>
            <person name="Wong C."/>
            <person name="Yamamura Y."/>
            <person name="Yuan S."/>
            <person name="Shinozaki K."/>
            <person name="Davis R.W."/>
            <person name="Theologis A."/>
            <person name="Ecker J.R."/>
        </authorList>
    </citation>
    <scope>NUCLEOTIDE SEQUENCE [LARGE SCALE MRNA]</scope>
    <source>
        <strain>cv. Columbia</strain>
    </source>
</reference>
<reference key="4">
    <citation type="submission" date="2002-03" db="EMBL/GenBank/DDBJ databases">
        <title>Full-length cDNA from Arabidopsis thaliana.</title>
        <authorList>
            <person name="Brover V.V."/>
            <person name="Troukhan M.E."/>
            <person name="Alexandrov N.A."/>
            <person name="Lu Y.-P."/>
            <person name="Flavell R.B."/>
            <person name="Feldmann K.A."/>
        </authorList>
    </citation>
    <scope>NUCLEOTIDE SEQUENCE [LARGE SCALE MRNA]</scope>
</reference>
<reference key="5">
    <citation type="journal article" date="2002" name="Plant Physiol.">
        <title>Identification of Arabidopsis ethylene-responsive element binding factors with distinct induction kinetics after pathogen infection.</title>
        <authorList>
            <person name="Onate-Sanchez L."/>
            <person name="Singh K.B."/>
        </authorList>
    </citation>
    <scope>FUNCTION</scope>
    <scope>TISSUE SPECIFICITY</scope>
    <scope>INDUCTION</scope>
</reference>
<reference key="6">
    <citation type="journal article" date="2002" name="Plant Physiol.">
        <title>Transcriptional profiling reveals novel interactions between wounding, pathogen, abiotic stress, and hormonal responses in Arabidopsis.</title>
        <authorList>
            <person name="Cheong Y.H."/>
            <person name="Chang H.-S."/>
            <person name="Gupta R."/>
            <person name="Wang X."/>
            <person name="Zhu T."/>
            <person name="Luan S."/>
        </authorList>
    </citation>
    <scope>INDUCTION</scope>
</reference>
<reference key="7">
    <citation type="journal article" date="2006" name="Plant Physiol.">
        <title>Genome-wide analysis of the ERF gene family in Arabidopsis and rice.</title>
        <authorList>
            <person name="Nakano T."/>
            <person name="Suzuki K."/>
            <person name="Fujimura T."/>
            <person name="Shinshi H."/>
        </authorList>
    </citation>
    <scope>GENE FAMILY</scope>
    <scope>NOMENCLATURE</scope>
</reference>
<organism>
    <name type="scientific">Arabidopsis thaliana</name>
    <name type="common">Mouse-ear cress</name>
    <dbReference type="NCBI Taxonomy" id="3702"/>
    <lineage>
        <taxon>Eukaryota</taxon>
        <taxon>Viridiplantae</taxon>
        <taxon>Streptophyta</taxon>
        <taxon>Embryophyta</taxon>
        <taxon>Tracheophyta</taxon>
        <taxon>Spermatophyta</taxon>
        <taxon>Magnoliopsida</taxon>
        <taxon>eudicotyledons</taxon>
        <taxon>Gunneridae</taxon>
        <taxon>Pentapetalae</taxon>
        <taxon>rosids</taxon>
        <taxon>malvids</taxon>
        <taxon>Brassicales</taxon>
        <taxon>Brassicaceae</taxon>
        <taxon>Camelineae</taxon>
        <taxon>Arabidopsis</taxon>
    </lineage>
</organism>
<keyword id="KW-0010">Activator</keyword>
<keyword id="KW-0238">DNA-binding</keyword>
<keyword id="KW-0936">Ethylene signaling pathway</keyword>
<keyword id="KW-0539">Nucleus</keyword>
<keyword id="KW-0611">Plant defense</keyword>
<keyword id="KW-1185">Reference proteome</keyword>
<keyword id="KW-0804">Transcription</keyword>
<keyword id="KW-0805">Transcription regulation</keyword>
<protein>
    <recommendedName>
        <fullName>Ethylene-responsive transcription factor 13</fullName>
        <shortName>AtERF13</shortName>
    </recommendedName>
    <alternativeName>
        <fullName>Ethylene-responsive element-binding factor 13</fullName>
        <shortName>EREBP-13</shortName>
    </alternativeName>
</protein>
<evidence type="ECO:0000255" key="1"/>
<evidence type="ECO:0000255" key="2">
    <source>
        <dbReference type="PROSITE-ProRule" id="PRU00366"/>
    </source>
</evidence>
<evidence type="ECO:0000256" key="3">
    <source>
        <dbReference type="SAM" id="MobiDB-lite"/>
    </source>
</evidence>
<evidence type="ECO:0000269" key="4">
    <source>
    </source>
</evidence>
<evidence type="ECO:0000269" key="5">
    <source>
    </source>
</evidence>
<evidence type="ECO:0000305" key="6"/>
<name>ERF99_ARATH</name>
<proteinExistence type="evidence at protein level"/>